<comment type="catalytic activity">
    <reaction evidence="1">
        <text>S-adenosyl-L-methionine + a thiopurine = S-adenosyl-L-homocysteine + a thiopurine S-methylether.</text>
        <dbReference type="EC" id="2.1.1.67"/>
    </reaction>
</comment>
<comment type="subcellular location">
    <subcellularLocation>
        <location evidence="1">Cytoplasm</location>
    </subcellularLocation>
</comment>
<comment type="similarity">
    <text evidence="1">Belongs to the class I-like SAM-binding methyltransferase superfamily. TPMT family.</text>
</comment>
<protein>
    <recommendedName>
        <fullName evidence="1">Thiopurine S-methyltransferase</fullName>
        <ecNumber evidence="1">2.1.1.67</ecNumber>
    </recommendedName>
    <alternativeName>
        <fullName evidence="1">Thiopurine methyltransferase</fullName>
    </alternativeName>
</protein>
<evidence type="ECO:0000255" key="1">
    <source>
        <dbReference type="HAMAP-Rule" id="MF_00812"/>
    </source>
</evidence>
<accession>Q8EJ86</accession>
<name>TPMT_SHEON</name>
<sequence>MEPGFWHEKWQQQQIGFHQQDVNPFLVTYWHQLALPADAKIFVPLCGKSLDMCFLAEQGHQVIGCELNELAVQQFFSDNQLPMQQSAEGEHQHYQTEQISLYQGDIFTLPQSITAEVSGFYDRAALIAWPESMRAQYAKQLAYLLPQGSVGLLVTLDYPQEVLSGPPFAVSPTWVETHLSEDFEIQPLACQDVLADNPRFVKKAVPWLNEAVYLLKRR</sequence>
<reference key="1">
    <citation type="journal article" date="2002" name="Nat. Biotechnol.">
        <title>Genome sequence of the dissimilatory metal ion-reducing bacterium Shewanella oneidensis.</title>
        <authorList>
            <person name="Heidelberg J.F."/>
            <person name="Paulsen I.T."/>
            <person name="Nelson K.E."/>
            <person name="Gaidos E.J."/>
            <person name="Nelson W.C."/>
            <person name="Read T.D."/>
            <person name="Eisen J.A."/>
            <person name="Seshadri R."/>
            <person name="Ward N.L."/>
            <person name="Methe B.A."/>
            <person name="Clayton R.A."/>
            <person name="Meyer T."/>
            <person name="Tsapin A."/>
            <person name="Scott J."/>
            <person name="Beanan M.J."/>
            <person name="Brinkac L.M."/>
            <person name="Daugherty S.C."/>
            <person name="DeBoy R.T."/>
            <person name="Dodson R.J."/>
            <person name="Durkin A.S."/>
            <person name="Haft D.H."/>
            <person name="Kolonay J.F."/>
            <person name="Madupu R."/>
            <person name="Peterson J.D."/>
            <person name="Umayam L.A."/>
            <person name="White O."/>
            <person name="Wolf A.M."/>
            <person name="Vamathevan J.J."/>
            <person name="Weidman J.F."/>
            <person name="Impraim M."/>
            <person name="Lee K."/>
            <person name="Berry K.J."/>
            <person name="Lee C."/>
            <person name="Mueller J."/>
            <person name="Khouri H.M."/>
            <person name="Gill J."/>
            <person name="Utterback T.R."/>
            <person name="McDonald L.A."/>
            <person name="Feldblyum T.V."/>
            <person name="Smith H.O."/>
            <person name="Venter J.C."/>
            <person name="Nealson K.H."/>
            <person name="Fraser C.M."/>
        </authorList>
    </citation>
    <scope>NUCLEOTIDE SEQUENCE [LARGE SCALE GENOMIC DNA]</scope>
    <source>
        <strain>ATCC 700550 / JCM 31522 / CIP 106686 / LMG 19005 / NCIMB 14063 / MR-1</strain>
    </source>
</reference>
<organism>
    <name type="scientific">Shewanella oneidensis (strain ATCC 700550 / JCM 31522 / CIP 106686 / LMG 19005 / NCIMB 14063 / MR-1)</name>
    <dbReference type="NCBI Taxonomy" id="211586"/>
    <lineage>
        <taxon>Bacteria</taxon>
        <taxon>Pseudomonadati</taxon>
        <taxon>Pseudomonadota</taxon>
        <taxon>Gammaproteobacteria</taxon>
        <taxon>Alteromonadales</taxon>
        <taxon>Shewanellaceae</taxon>
        <taxon>Shewanella</taxon>
    </lineage>
</organism>
<feature type="chain" id="PRO_0000220132" description="Thiopurine S-methyltransferase">
    <location>
        <begin position="1"/>
        <end position="218"/>
    </location>
</feature>
<feature type="binding site" evidence="1">
    <location>
        <position position="10"/>
    </location>
    <ligand>
        <name>S-adenosyl-L-methionine</name>
        <dbReference type="ChEBI" id="CHEBI:59789"/>
    </ligand>
</feature>
<feature type="binding site" evidence="1">
    <location>
        <position position="45"/>
    </location>
    <ligand>
        <name>S-adenosyl-L-methionine</name>
        <dbReference type="ChEBI" id="CHEBI:59789"/>
    </ligand>
</feature>
<feature type="binding site" evidence="1">
    <location>
        <position position="66"/>
    </location>
    <ligand>
        <name>S-adenosyl-L-methionine</name>
        <dbReference type="ChEBI" id="CHEBI:59789"/>
    </ligand>
</feature>
<feature type="binding site" evidence="1">
    <location>
        <position position="123"/>
    </location>
    <ligand>
        <name>S-adenosyl-L-methionine</name>
        <dbReference type="ChEBI" id="CHEBI:59789"/>
    </ligand>
</feature>
<keyword id="KW-0963">Cytoplasm</keyword>
<keyword id="KW-0489">Methyltransferase</keyword>
<keyword id="KW-1185">Reference proteome</keyword>
<keyword id="KW-0949">S-adenosyl-L-methionine</keyword>
<keyword id="KW-0808">Transferase</keyword>
<dbReference type="EC" id="2.1.1.67" evidence="1"/>
<dbReference type="EMBL" id="AE014299">
    <property type="protein sequence ID" value="AAN53662.1"/>
    <property type="molecule type" value="Genomic_DNA"/>
</dbReference>
<dbReference type="RefSeq" id="NP_716217.1">
    <property type="nucleotide sequence ID" value="NC_004347.2"/>
</dbReference>
<dbReference type="RefSeq" id="WP_011070918.1">
    <property type="nucleotide sequence ID" value="NC_004347.2"/>
</dbReference>
<dbReference type="SMR" id="Q8EJ86"/>
<dbReference type="STRING" id="211586.SO_0582"/>
<dbReference type="PaxDb" id="211586-SO_0582"/>
<dbReference type="KEGG" id="son:SO_0582"/>
<dbReference type="PATRIC" id="fig|211586.12.peg.561"/>
<dbReference type="eggNOG" id="COG0500">
    <property type="taxonomic scope" value="Bacteria"/>
</dbReference>
<dbReference type="HOGENOM" id="CLU_085515_1_0_6"/>
<dbReference type="OrthoDB" id="9778208at2"/>
<dbReference type="PhylomeDB" id="Q8EJ86"/>
<dbReference type="BioCyc" id="SONE211586:G1GMP-551-MONOMER"/>
<dbReference type="Proteomes" id="UP000008186">
    <property type="component" value="Chromosome"/>
</dbReference>
<dbReference type="GO" id="GO:0005737">
    <property type="term" value="C:cytoplasm"/>
    <property type="evidence" value="ECO:0007669"/>
    <property type="project" value="UniProtKB-SubCell"/>
</dbReference>
<dbReference type="GO" id="GO:0008119">
    <property type="term" value="F:thiopurine S-methyltransferase activity"/>
    <property type="evidence" value="ECO:0000318"/>
    <property type="project" value="GO_Central"/>
</dbReference>
<dbReference type="GO" id="GO:0032259">
    <property type="term" value="P:methylation"/>
    <property type="evidence" value="ECO:0007669"/>
    <property type="project" value="UniProtKB-KW"/>
</dbReference>
<dbReference type="GO" id="GO:0010038">
    <property type="term" value="P:response to metal ion"/>
    <property type="evidence" value="ECO:0007669"/>
    <property type="project" value="InterPro"/>
</dbReference>
<dbReference type="FunFam" id="3.40.50.150:FF:000101">
    <property type="entry name" value="Thiopurine S-methyltransferase"/>
    <property type="match status" value="1"/>
</dbReference>
<dbReference type="Gene3D" id="3.40.50.150">
    <property type="entry name" value="Vaccinia Virus protein VP39"/>
    <property type="match status" value="1"/>
</dbReference>
<dbReference type="HAMAP" id="MF_00812">
    <property type="entry name" value="Thiopur_methtran"/>
    <property type="match status" value="1"/>
</dbReference>
<dbReference type="InterPro" id="IPR029063">
    <property type="entry name" value="SAM-dependent_MTases_sf"/>
</dbReference>
<dbReference type="InterPro" id="IPR022474">
    <property type="entry name" value="Thiopur_S-MeTfrase_Se/Te_detox"/>
</dbReference>
<dbReference type="InterPro" id="IPR025835">
    <property type="entry name" value="Thiopurine_S-MeTrfase"/>
</dbReference>
<dbReference type="InterPro" id="IPR008854">
    <property type="entry name" value="TPMT"/>
</dbReference>
<dbReference type="NCBIfam" id="NF009732">
    <property type="entry name" value="PRK13255.1"/>
    <property type="match status" value="1"/>
</dbReference>
<dbReference type="NCBIfam" id="TIGR03840">
    <property type="entry name" value="TMPT_Se_Te"/>
    <property type="match status" value="1"/>
</dbReference>
<dbReference type="PANTHER" id="PTHR10259">
    <property type="entry name" value="THIOPURINE S-METHYLTRANSFERASE"/>
    <property type="match status" value="1"/>
</dbReference>
<dbReference type="PANTHER" id="PTHR10259:SF11">
    <property type="entry name" value="THIOPURINE S-METHYLTRANSFERASE"/>
    <property type="match status" value="1"/>
</dbReference>
<dbReference type="Pfam" id="PF05724">
    <property type="entry name" value="TPMT"/>
    <property type="match status" value="1"/>
</dbReference>
<dbReference type="PIRSF" id="PIRSF023956">
    <property type="entry name" value="Thiopurine_S-methyltransferase"/>
    <property type="match status" value="1"/>
</dbReference>
<dbReference type="SUPFAM" id="SSF53335">
    <property type="entry name" value="S-adenosyl-L-methionine-dependent methyltransferases"/>
    <property type="match status" value="1"/>
</dbReference>
<dbReference type="PROSITE" id="PS51585">
    <property type="entry name" value="SAM_MT_TPMT"/>
    <property type="match status" value="1"/>
</dbReference>
<proteinExistence type="inferred from homology"/>
<gene>
    <name evidence="1" type="primary">tpm</name>
    <name type="ordered locus">SO_0582</name>
</gene>